<accession>B7HLM2</accession>
<keyword id="KW-0378">Hydrolase</keyword>
<keyword id="KW-0479">Metal-binding</keyword>
<keyword id="KW-0665">Pyrimidine biosynthesis</keyword>
<keyword id="KW-0862">Zinc</keyword>
<evidence type="ECO:0000255" key="1">
    <source>
        <dbReference type="HAMAP-Rule" id="MF_00220"/>
    </source>
</evidence>
<organism>
    <name type="scientific">Bacillus cereus (strain AH187)</name>
    <dbReference type="NCBI Taxonomy" id="405534"/>
    <lineage>
        <taxon>Bacteria</taxon>
        <taxon>Bacillati</taxon>
        <taxon>Bacillota</taxon>
        <taxon>Bacilli</taxon>
        <taxon>Bacillales</taxon>
        <taxon>Bacillaceae</taxon>
        <taxon>Bacillus</taxon>
        <taxon>Bacillus cereus group</taxon>
    </lineage>
</organism>
<comment type="function">
    <text evidence="1">Catalyzes the reversible cyclization of carbamoyl aspartate to dihydroorotate.</text>
</comment>
<comment type="catalytic activity">
    <reaction evidence="1">
        <text>(S)-dihydroorotate + H2O = N-carbamoyl-L-aspartate + H(+)</text>
        <dbReference type="Rhea" id="RHEA:24296"/>
        <dbReference type="ChEBI" id="CHEBI:15377"/>
        <dbReference type="ChEBI" id="CHEBI:15378"/>
        <dbReference type="ChEBI" id="CHEBI:30864"/>
        <dbReference type="ChEBI" id="CHEBI:32814"/>
        <dbReference type="EC" id="3.5.2.3"/>
    </reaction>
</comment>
<comment type="cofactor">
    <cofactor evidence="1">
        <name>Zn(2+)</name>
        <dbReference type="ChEBI" id="CHEBI:29105"/>
    </cofactor>
    <text evidence="1">Binds 2 Zn(2+) ions per subunit.</text>
</comment>
<comment type="pathway">
    <text evidence="1">Pyrimidine metabolism; UMP biosynthesis via de novo pathway; (S)-dihydroorotate from bicarbonate: step 3/3.</text>
</comment>
<comment type="similarity">
    <text evidence="1">Belongs to the metallo-dependent hydrolases superfamily. DHOase family. Class I DHOase subfamily.</text>
</comment>
<feature type="chain" id="PRO_1000193091" description="Dihydroorotase">
    <location>
        <begin position="1"/>
        <end position="428"/>
    </location>
</feature>
<feature type="active site" evidence="1">
    <location>
        <position position="304"/>
    </location>
</feature>
<feature type="binding site" evidence="1">
    <location>
        <position position="59"/>
    </location>
    <ligand>
        <name>Zn(2+)</name>
        <dbReference type="ChEBI" id="CHEBI:29105"/>
        <label>1</label>
    </ligand>
</feature>
<feature type="binding site" evidence="1">
    <location>
        <begin position="61"/>
        <end position="63"/>
    </location>
    <ligand>
        <name>substrate</name>
    </ligand>
</feature>
<feature type="binding site" evidence="1">
    <location>
        <position position="61"/>
    </location>
    <ligand>
        <name>Zn(2+)</name>
        <dbReference type="ChEBI" id="CHEBI:29105"/>
        <label>1</label>
    </ligand>
</feature>
<feature type="binding site" evidence="1">
    <location>
        <position position="93"/>
    </location>
    <ligand>
        <name>substrate</name>
    </ligand>
</feature>
<feature type="binding site" evidence="1">
    <location>
        <position position="151"/>
    </location>
    <ligand>
        <name>Zn(2+)</name>
        <dbReference type="ChEBI" id="CHEBI:29105"/>
        <label>1</label>
    </ligand>
</feature>
<feature type="binding site" evidence="1">
    <location>
        <position position="151"/>
    </location>
    <ligand>
        <name>Zn(2+)</name>
        <dbReference type="ChEBI" id="CHEBI:29105"/>
        <label>2</label>
    </ligand>
</feature>
<feature type="binding site" evidence="1">
    <location>
        <position position="178"/>
    </location>
    <ligand>
        <name>Zn(2+)</name>
        <dbReference type="ChEBI" id="CHEBI:29105"/>
        <label>2</label>
    </ligand>
</feature>
<feature type="binding site" evidence="1">
    <location>
        <position position="231"/>
    </location>
    <ligand>
        <name>Zn(2+)</name>
        <dbReference type="ChEBI" id="CHEBI:29105"/>
        <label>2</label>
    </ligand>
</feature>
<feature type="binding site" evidence="1">
    <location>
        <position position="277"/>
    </location>
    <ligand>
        <name>substrate</name>
    </ligand>
</feature>
<feature type="binding site" evidence="1">
    <location>
        <position position="304"/>
    </location>
    <ligand>
        <name>Zn(2+)</name>
        <dbReference type="ChEBI" id="CHEBI:29105"/>
        <label>1</label>
    </ligand>
</feature>
<feature type="binding site" evidence="1">
    <location>
        <position position="308"/>
    </location>
    <ligand>
        <name>substrate</name>
    </ligand>
</feature>
<feature type="binding site" evidence="1">
    <location>
        <begin position="322"/>
        <end position="323"/>
    </location>
    <ligand>
        <name>substrate</name>
    </ligand>
</feature>
<gene>
    <name evidence="1" type="primary">pyrC</name>
    <name type="ordered locus">BCAH187_A3937</name>
</gene>
<proteinExistence type="inferred from homology"/>
<dbReference type="EC" id="3.5.2.3" evidence="1"/>
<dbReference type="EMBL" id="CP001177">
    <property type="protein sequence ID" value="ACJ78020.1"/>
    <property type="molecule type" value="Genomic_DNA"/>
</dbReference>
<dbReference type="SMR" id="B7HLM2"/>
<dbReference type="KEGG" id="bcr:BCAH187_A3937"/>
<dbReference type="HOGENOM" id="CLU_015572_1_0_9"/>
<dbReference type="UniPathway" id="UPA00070">
    <property type="reaction ID" value="UER00117"/>
</dbReference>
<dbReference type="Proteomes" id="UP000002214">
    <property type="component" value="Chromosome"/>
</dbReference>
<dbReference type="GO" id="GO:0005737">
    <property type="term" value="C:cytoplasm"/>
    <property type="evidence" value="ECO:0007669"/>
    <property type="project" value="TreeGrafter"/>
</dbReference>
<dbReference type="GO" id="GO:0004038">
    <property type="term" value="F:allantoinase activity"/>
    <property type="evidence" value="ECO:0007669"/>
    <property type="project" value="TreeGrafter"/>
</dbReference>
<dbReference type="GO" id="GO:0004151">
    <property type="term" value="F:dihydroorotase activity"/>
    <property type="evidence" value="ECO:0007669"/>
    <property type="project" value="UniProtKB-UniRule"/>
</dbReference>
<dbReference type="GO" id="GO:0008270">
    <property type="term" value="F:zinc ion binding"/>
    <property type="evidence" value="ECO:0007669"/>
    <property type="project" value="UniProtKB-UniRule"/>
</dbReference>
<dbReference type="GO" id="GO:0044205">
    <property type="term" value="P:'de novo' UMP biosynthetic process"/>
    <property type="evidence" value="ECO:0007669"/>
    <property type="project" value="UniProtKB-UniRule"/>
</dbReference>
<dbReference type="GO" id="GO:0006145">
    <property type="term" value="P:purine nucleobase catabolic process"/>
    <property type="evidence" value="ECO:0007669"/>
    <property type="project" value="TreeGrafter"/>
</dbReference>
<dbReference type="CDD" id="cd01317">
    <property type="entry name" value="DHOase_IIa"/>
    <property type="match status" value="1"/>
</dbReference>
<dbReference type="FunFam" id="2.30.40.10:FF:000007">
    <property type="entry name" value="Dihydroorotase"/>
    <property type="match status" value="1"/>
</dbReference>
<dbReference type="FunFam" id="3.20.20.140:FF:000025">
    <property type="entry name" value="Dihydroorotase"/>
    <property type="match status" value="1"/>
</dbReference>
<dbReference type="Gene3D" id="3.20.20.140">
    <property type="entry name" value="Metal-dependent hydrolases"/>
    <property type="match status" value="1"/>
</dbReference>
<dbReference type="Gene3D" id="2.30.40.10">
    <property type="entry name" value="Urease, subunit C, domain 1"/>
    <property type="match status" value="2"/>
</dbReference>
<dbReference type="HAMAP" id="MF_00220_B">
    <property type="entry name" value="PyrC_classI_B"/>
    <property type="match status" value="1"/>
</dbReference>
<dbReference type="InterPro" id="IPR006680">
    <property type="entry name" value="Amidohydro-rel"/>
</dbReference>
<dbReference type="InterPro" id="IPR004722">
    <property type="entry name" value="DHOase"/>
</dbReference>
<dbReference type="InterPro" id="IPR050138">
    <property type="entry name" value="DHOase/Allantoinase_Hydrolase"/>
</dbReference>
<dbReference type="InterPro" id="IPR002195">
    <property type="entry name" value="Dihydroorotase_CS"/>
</dbReference>
<dbReference type="InterPro" id="IPR011059">
    <property type="entry name" value="Metal-dep_hydrolase_composite"/>
</dbReference>
<dbReference type="InterPro" id="IPR032466">
    <property type="entry name" value="Metal_Hydrolase"/>
</dbReference>
<dbReference type="NCBIfam" id="NF006837">
    <property type="entry name" value="PRK09357.1-2"/>
    <property type="match status" value="1"/>
</dbReference>
<dbReference type="NCBIfam" id="TIGR00857">
    <property type="entry name" value="pyrC_multi"/>
    <property type="match status" value="1"/>
</dbReference>
<dbReference type="PANTHER" id="PTHR43668">
    <property type="entry name" value="ALLANTOINASE"/>
    <property type="match status" value="1"/>
</dbReference>
<dbReference type="PANTHER" id="PTHR43668:SF2">
    <property type="entry name" value="ALLANTOINASE"/>
    <property type="match status" value="1"/>
</dbReference>
<dbReference type="Pfam" id="PF01979">
    <property type="entry name" value="Amidohydro_1"/>
    <property type="match status" value="1"/>
</dbReference>
<dbReference type="SUPFAM" id="SSF51338">
    <property type="entry name" value="Composite domain of metallo-dependent hydrolases"/>
    <property type="match status" value="1"/>
</dbReference>
<dbReference type="SUPFAM" id="SSF51556">
    <property type="entry name" value="Metallo-dependent hydrolases"/>
    <property type="match status" value="1"/>
</dbReference>
<dbReference type="PROSITE" id="PS00482">
    <property type="entry name" value="DIHYDROOROTASE_1"/>
    <property type="match status" value="1"/>
</dbReference>
<dbReference type="PROSITE" id="PS00483">
    <property type="entry name" value="DIHYDROOROTASE_2"/>
    <property type="match status" value="1"/>
</dbReference>
<sequence>MNYLFKDGRYMNEEGKIVATDLLVQDGKIAKVAENITADNAEVIDVNGKLIAPGLVDVHVHLREPGGEHKETIETGTLAAAKGGFTTICAMPNTRPVPDCREHMEDLQNRIKEKAHVNVLPYGAITVRQAGSEMTDFETLKELGAFAFTDDGVGVQDASMMLAAMKRAAKLNMAVVAHCEENTLINKGCVHEGKFSEKHGLNGIPSVCESVHIARDILLAEAADCHYHVCHVSTKGSVRVIRDAKRAGIKVTAEVTPHHLVLCEDDIPSADPNFKMNPPLRGKEDHAALIEGLLDGTIDMIATDHAPHTAEEKAQGIERAPFGITGFETAFPLLYTNLVKKGIITLEQLIQFLTEKPADTFGLEAGRLKEGRTADITIIDLEQEEEIDPTTFLSKGKNTPFAGWKCQGWPVMTIVGGKIAWQKESALV</sequence>
<reference key="1">
    <citation type="submission" date="2008-10" db="EMBL/GenBank/DDBJ databases">
        <title>Genome sequence of Bacillus cereus AH187.</title>
        <authorList>
            <person name="Dodson R.J."/>
            <person name="Durkin A.S."/>
            <person name="Rosovitz M.J."/>
            <person name="Rasko D.A."/>
            <person name="Kolsto A.B."/>
            <person name="Okstad O.A."/>
            <person name="Ravel J."/>
            <person name="Sutton G."/>
        </authorList>
    </citation>
    <scope>NUCLEOTIDE SEQUENCE [LARGE SCALE GENOMIC DNA]</scope>
    <source>
        <strain>AH187</strain>
    </source>
</reference>
<protein>
    <recommendedName>
        <fullName evidence="1">Dihydroorotase</fullName>
        <shortName evidence="1">DHOase</shortName>
        <ecNumber evidence="1">3.5.2.3</ecNumber>
    </recommendedName>
</protein>
<name>PYRC_BACC7</name>